<keyword id="KW-0934">Plastid</keyword>
<keyword id="KW-0687">Ribonucleoprotein</keyword>
<keyword id="KW-0689">Ribosomal protein</keyword>
<keyword id="KW-0694">RNA-binding</keyword>
<keyword id="KW-0699">rRNA-binding</keyword>
<accession>A8W3L5</accession>
<geneLocation type="plastid"/>
<name>RR11_CUSOB</name>
<sequence length="138" mass="15139">MVKLIPRISSRRNGRIRLRKNKHKIPQGVIHIQASLQNTIVTVTDVRGRVVSWASAGSAGFKGTTRRTPFAAQTAATNAIHTAINQGMREADVLIKGPGLGRDAALRAIRRSGIRLELILDVTPMPHNGCRPPKKRRV</sequence>
<protein>
    <recommendedName>
        <fullName evidence="2">Small ribosomal subunit protein uS11c</fullName>
    </recommendedName>
    <alternativeName>
        <fullName>Plastid 30S ribosomal protein S11</fullName>
    </alternativeName>
</protein>
<comment type="subunit">
    <text evidence="1">Part of the 30S ribosomal subunit.</text>
</comment>
<comment type="subcellular location">
    <subcellularLocation>
        <location>Plastid</location>
    </subcellularLocation>
</comment>
<comment type="similarity">
    <text evidence="1">Belongs to the universal ribosomal protein uS11 family.</text>
</comment>
<comment type="caution">
    <text evidence="2">Only inflorescences, fruits, starved seedlings and stressed stem tips are green in this organism.</text>
</comment>
<proteinExistence type="inferred from homology"/>
<feature type="chain" id="PRO_0000323361" description="Small ribosomal subunit protein uS11c">
    <location>
        <begin position="1"/>
        <end position="138"/>
    </location>
</feature>
<dbReference type="EMBL" id="EU189133">
    <property type="protein sequence ID" value="ABW20590.1"/>
    <property type="molecule type" value="Genomic_DNA"/>
</dbReference>
<dbReference type="RefSeq" id="YP_001531245.1">
    <property type="nucleotide sequence ID" value="NC_009949.1"/>
</dbReference>
<dbReference type="SMR" id="A8W3L5"/>
<dbReference type="GeneID" id="5714805"/>
<dbReference type="GO" id="GO:0009536">
    <property type="term" value="C:plastid"/>
    <property type="evidence" value="ECO:0007669"/>
    <property type="project" value="UniProtKB-SubCell"/>
</dbReference>
<dbReference type="GO" id="GO:1990904">
    <property type="term" value="C:ribonucleoprotein complex"/>
    <property type="evidence" value="ECO:0007669"/>
    <property type="project" value="UniProtKB-KW"/>
</dbReference>
<dbReference type="GO" id="GO:0005840">
    <property type="term" value="C:ribosome"/>
    <property type="evidence" value="ECO:0007669"/>
    <property type="project" value="UniProtKB-KW"/>
</dbReference>
<dbReference type="GO" id="GO:0019843">
    <property type="term" value="F:rRNA binding"/>
    <property type="evidence" value="ECO:0007669"/>
    <property type="project" value="UniProtKB-KW"/>
</dbReference>
<dbReference type="GO" id="GO:0003735">
    <property type="term" value="F:structural constituent of ribosome"/>
    <property type="evidence" value="ECO:0007669"/>
    <property type="project" value="InterPro"/>
</dbReference>
<dbReference type="GO" id="GO:0006412">
    <property type="term" value="P:translation"/>
    <property type="evidence" value="ECO:0007669"/>
    <property type="project" value="InterPro"/>
</dbReference>
<dbReference type="Gene3D" id="3.30.420.80">
    <property type="entry name" value="Ribosomal protein S11"/>
    <property type="match status" value="1"/>
</dbReference>
<dbReference type="HAMAP" id="MF_01310">
    <property type="entry name" value="Ribosomal_uS11"/>
    <property type="match status" value="1"/>
</dbReference>
<dbReference type="InterPro" id="IPR001971">
    <property type="entry name" value="Ribosomal_uS11"/>
</dbReference>
<dbReference type="InterPro" id="IPR019981">
    <property type="entry name" value="Ribosomal_uS11_bac-type"/>
</dbReference>
<dbReference type="InterPro" id="IPR018102">
    <property type="entry name" value="Ribosomal_uS11_CS"/>
</dbReference>
<dbReference type="InterPro" id="IPR036967">
    <property type="entry name" value="Ribosomal_uS11_sf"/>
</dbReference>
<dbReference type="NCBIfam" id="NF003698">
    <property type="entry name" value="PRK05309.1"/>
    <property type="match status" value="1"/>
</dbReference>
<dbReference type="NCBIfam" id="TIGR03632">
    <property type="entry name" value="uS11_bact"/>
    <property type="match status" value="1"/>
</dbReference>
<dbReference type="PANTHER" id="PTHR11759">
    <property type="entry name" value="40S RIBOSOMAL PROTEIN S14/30S RIBOSOMAL PROTEIN S11"/>
    <property type="match status" value="1"/>
</dbReference>
<dbReference type="Pfam" id="PF00411">
    <property type="entry name" value="Ribosomal_S11"/>
    <property type="match status" value="1"/>
</dbReference>
<dbReference type="PIRSF" id="PIRSF002131">
    <property type="entry name" value="Ribosomal_S11"/>
    <property type="match status" value="1"/>
</dbReference>
<dbReference type="SUPFAM" id="SSF53137">
    <property type="entry name" value="Translational machinery components"/>
    <property type="match status" value="1"/>
</dbReference>
<dbReference type="PROSITE" id="PS00054">
    <property type="entry name" value="RIBOSOMAL_S11"/>
    <property type="match status" value="1"/>
</dbReference>
<organism>
    <name type="scientific">Cuscuta obtusiflora</name>
    <name type="common">Peruvian dodder</name>
    <dbReference type="NCBI Taxonomy" id="437280"/>
    <lineage>
        <taxon>Eukaryota</taxon>
        <taxon>Viridiplantae</taxon>
        <taxon>Streptophyta</taxon>
        <taxon>Embryophyta</taxon>
        <taxon>Tracheophyta</taxon>
        <taxon>Spermatophyta</taxon>
        <taxon>Magnoliopsida</taxon>
        <taxon>eudicotyledons</taxon>
        <taxon>Gunneridae</taxon>
        <taxon>Pentapetalae</taxon>
        <taxon>asterids</taxon>
        <taxon>lamiids</taxon>
        <taxon>Solanales</taxon>
        <taxon>Convolvulaceae</taxon>
        <taxon>Cuscuteae</taxon>
        <taxon>Cuscuta</taxon>
        <taxon>Cuscuta subgen. Grammica</taxon>
        <taxon>Cuscuta sect. Cleistogrammica</taxon>
    </lineage>
</organism>
<gene>
    <name evidence="1" type="primary">rps11</name>
</gene>
<reference key="1">
    <citation type="journal article" date="2007" name="BMC Plant Biol.">
        <title>Complete plastid genome sequences suggest strong selection for retention of photosynthetic genes in the parasitic plant genus Cuscuta.</title>
        <authorList>
            <person name="McNeal J.R."/>
            <person name="Kuehl J.V."/>
            <person name="Boore J.L."/>
            <person name="dePamphilis C.W."/>
        </authorList>
    </citation>
    <scope>NUCLEOTIDE SEQUENCE [LARGE SCALE GENOMIC DNA]</scope>
</reference>
<evidence type="ECO:0000255" key="1">
    <source>
        <dbReference type="HAMAP-Rule" id="MF_01310"/>
    </source>
</evidence>
<evidence type="ECO:0000305" key="2"/>